<protein>
    <recommendedName>
        <fullName evidence="1">Large ribosomal subunit protein bL32</fullName>
    </recommendedName>
    <alternativeName>
        <fullName evidence="2">50S ribosomal protein L32</fullName>
    </alternativeName>
</protein>
<keyword id="KW-1185">Reference proteome</keyword>
<keyword id="KW-0687">Ribonucleoprotein</keyword>
<keyword id="KW-0689">Ribosomal protein</keyword>
<dbReference type="EMBL" id="CP000141">
    <property type="protein sequence ID" value="ABB13801.1"/>
    <property type="molecule type" value="Genomic_DNA"/>
</dbReference>
<dbReference type="RefSeq" id="WP_011344360.1">
    <property type="nucleotide sequence ID" value="NC_007503.1"/>
</dbReference>
<dbReference type="SMR" id="Q3AC49"/>
<dbReference type="FunCoup" id="Q3AC49">
    <property type="interactions" value="158"/>
</dbReference>
<dbReference type="STRING" id="246194.CHY_1453"/>
<dbReference type="KEGG" id="chy:CHY_1453"/>
<dbReference type="eggNOG" id="COG0333">
    <property type="taxonomic scope" value="Bacteria"/>
</dbReference>
<dbReference type="HOGENOM" id="CLU_129084_1_3_9"/>
<dbReference type="InParanoid" id="Q3AC49"/>
<dbReference type="OrthoDB" id="9812874at2"/>
<dbReference type="Proteomes" id="UP000002706">
    <property type="component" value="Chromosome"/>
</dbReference>
<dbReference type="GO" id="GO:0015934">
    <property type="term" value="C:large ribosomal subunit"/>
    <property type="evidence" value="ECO:0007669"/>
    <property type="project" value="InterPro"/>
</dbReference>
<dbReference type="GO" id="GO:0003735">
    <property type="term" value="F:structural constituent of ribosome"/>
    <property type="evidence" value="ECO:0007669"/>
    <property type="project" value="InterPro"/>
</dbReference>
<dbReference type="GO" id="GO:0006412">
    <property type="term" value="P:translation"/>
    <property type="evidence" value="ECO:0007669"/>
    <property type="project" value="UniProtKB-UniRule"/>
</dbReference>
<dbReference type="HAMAP" id="MF_00340">
    <property type="entry name" value="Ribosomal_bL32"/>
    <property type="match status" value="1"/>
</dbReference>
<dbReference type="InterPro" id="IPR002677">
    <property type="entry name" value="Ribosomal_bL32"/>
</dbReference>
<dbReference type="InterPro" id="IPR044957">
    <property type="entry name" value="Ribosomal_bL32_bact"/>
</dbReference>
<dbReference type="InterPro" id="IPR011332">
    <property type="entry name" value="Ribosomal_zn-bd"/>
</dbReference>
<dbReference type="NCBIfam" id="TIGR01031">
    <property type="entry name" value="rpmF_bact"/>
    <property type="match status" value="1"/>
</dbReference>
<dbReference type="PANTHER" id="PTHR35534">
    <property type="entry name" value="50S RIBOSOMAL PROTEIN L32"/>
    <property type="match status" value="1"/>
</dbReference>
<dbReference type="PANTHER" id="PTHR35534:SF1">
    <property type="entry name" value="LARGE RIBOSOMAL SUBUNIT PROTEIN BL32"/>
    <property type="match status" value="1"/>
</dbReference>
<dbReference type="Pfam" id="PF01783">
    <property type="entry name" value="Ribosomal_L32p"/>
    <property type="match status" value="1"/>
</dbReference>
<dbReference type="SUPFAM" id="SSF57829">
    <property type="entry name" value="Zn-binding ribosomal proteins"/>
    <property type="match status" value="1"/>
</dbReference>
<comment type="similarity">
    <text evidence="1">Belongs to the bacterial ribosomal protein bL32 family.</text>
</comment>
<reference key="1">
    <citation type="journal article" date="2005" name="PLoS Genet.">
        <title>Life in hot carbon monoxide: the complete genome sequence of Carboxydothermus hydrogenoformans Z-2901.</title>
        <authorList>
            <person name="Wu M."/>
            <person name="Ren Q."/>
            <person name="Durkin A.S."/>
            <person name="Daugherty S.C."/>
            <person name="Brinkac L.M."/>
            <person name="Dodson R.J."/>
            <person name="Madupu R."/>
            <person name="Sullivan S.A."/>
            <person name="Kolonay J.F."/>
            <person name="Nelson W.C."/>
            <person name="Tallon L.J."/>
            <person name="Jones K.M."/>
            <person name="Ulrich L.E."/>
            <person name="Gonzalez J.M."/>
            <person name="Zhulin I.B."/>
            <person name="Robb F.T."/>
            <person name="Eisen J.A."/>
        </authorList>
    </citation>
    <scope>NUCLEOTIDE SEQUENCE [LARGE SCALE GENOMIC DNA]</scope>
    <source>
        <strain>ATCC BAA-161 / DSM 6008 / Z-2901</strain>
    </source>
</reference>
<name>RL32_CARHZ</name>
<gene>
    <name evidence="1" type="primary">rpmF</name>
    <name type="ordered locus">CHY_1453</name>
</gene>
<accession>Q3AC49</accession>
<proteinExistence type="inferred from homology"/>
<organism>
    <name type="scientific">Carboxydothermus hydrogenoformans (strain ATCC BAA-161 / DSM 6008 / Z-2901)</name>
    <dbReference type="NCBI Taxonomy" id="246194"/>
    <lineage>
        <taxon>Bacteria</taxon>
        <taxon>Bacillati</taxon>
        <taxon>Bacillota</taxon>
        <taxon>Clostridia</taxon>
        <taxon>Thermoanaerobacterales</taxon>
        <taxon>Thermoanaerobacteraceae</taxon>
        <taxon>Carboxydothermus</taxon>
    </lineage>
</organism>
<evidence type="ECO:0000255" key="1">
    <source>
        <dbReference type="HAMAP-Rule" id="MF_00340"/>
    </source>
</evidence>
<evidence type="ECO:0000305" key="2"/>
<sequence>MGVPKRRVSKARKNKRRSQWKIAAPKLVSCPHCHQLMIPHRVCKNCGYYDGRQVVNME</sequence>
<feature type="chain" id="PRO_0000225713" description="Large ribosomal subunit protein bL32">
    <location>
        <begin position="1"/>
        <end position="58"/>
    </location>
</feature>